<protein>
    <recommendedName>
        <fullName>Myoglobin</fullName>
    </recommendedName>
    <alternativeName>
        <fullName evidence="1">Nitrite reductase MB</fullName>
        <ecNumber evidence="1">1.7.-.-</ecNumber>
    </alternativeName>
    <alternativeName>
        <fullName evidence="1">Pseudoperoxidase MB</fullName>
        <ecNumber evidence="1">1.11.1.-</ecNumber>
    </alternativeName>
</protein>
<reference key="1">
    <citation type="journal article" date="1978" name="Biochemistry">
        <title>Complete amino acid sequence of the major component myoglobin from the humpback whale, Megaptera novaeangliae.</title>
        <authorList>
            <person name="Lehman L.D."/>
            <person name="Dwulet F.E."/>
            <person name="Jones B.N."/>
            <person name="Bogardt R.A. Jr."/>
            <person name="Krueckeberg S.T."/>
            <person name="Visscher R.B."/>
            <person name="Gurd F.R.N."/>
        </authorList>
    </citation>
    <scope>PROTEIN SEQUENCE OF 2-154</scope>
    <source>
        <tissue>Skeletal muscle</tissue>
    </source>
</reference>
<reference key="2">
    <citation type="journal article" date="1967" name="Eur. J. Biochem.">
        <title>A protein sequenator.</title>
        <authorList>
            <person name="Edman P."/>
            <person name="Begg G."/>
        </authorList>
    </citation>
    <scope>PROTEIN SEQUENCE OF 2-61</scope>
</reference>
<gene>
    <name type="primary">MB</name>
</gene>
<feature type="initiator methionine" description="Removed" evidence="8 9">
    <location>
        <position position="1"/>
    </location>
</feature>
<feature type="chain" id="PRO_0000053316" description="Myoglobin">
    <location>
        <begin position="2"/>
        <end position="154"/>
    </location>
</feature>
<feature type="domain" description="Globin" evidence="7">
    <location>
        <begin position="2"/>
        <end position="148"/>
    </location>
</feature>
<feature type="binding site" evidence="5">
    <location>
        <position position="65"/>
    </location>
    <ligand>
        <name>nitrite</name>
        <dbReference type="ChEBI" id="CHEBI:16301"/>
    </ligand>
</feature>
<feature type="binding site" evidence="3 7">
    <location>
        <position position="65"/>
    </location>
    <ligand>
        <name>O2</name>
        <dbReference type="ChEBI" id="CHEBI:15379"/>
    </ligand>
</feature>
<feature type="binding site" description="proximal binding residue" evidence="1">
    <location>
        <position position="94"/>
    </location>
    <ligand>
        <name>heme b</name>
        <dbReference type="ChEBI" id="CHEBI:60344"/>
    </ligand>
    <ligandPart>
        <name>Fe</name>
        <dbReference type="ChEBI" id="CHEBI:18248"/>
    </ligandPart>
</feature>
<feature type="modified residue" description="Phosphoserine" evidence="6">
    <location>
        <position position="4"/>
    </location>
</feature>
<feature type="modified residue" description="Phosphothreonine" evidence="4">
    <location>
        <position position="68"/>
    </location>
</feature>
<evidence type="ECO:0000250" key="1">
    <source>
        <dbReference type="UniProtKB" id="P02144"/>
    </source>
</evidence>
<evidence type="ECO:0000250" key="2">
    <source>
        <dbReference type="UniProtKB" id="P02185"/>
    </source>
</evidence>
<evidence type="ECO:0000250" key="3">
    <source>
        <dbReference type="UniProtKB" id="P02189"/>
    </source>
</evidence>
<evidence type="ECO:0000250" key="4">
    <source>
        <dbReference type="UniProtKB" id="P04247"/>
    </source>
</evidence>
<evidence type="ECO:0000250" key="5">
    <source>
        <dbReference type="UniProtKB" id="P68082"/>
    </source>
</evidence>
<evidence type="ECO:0000250" key="6">
    <source>
        <dbReference type="UniProtKB" id="Q9QZ76"/>
    </source>
</evidence>
<evidence type="ECO:0000255" key="7">
    <source>
        <dbReference type="PROSITE-ProRule" id="PRU00238"/>
    </source>
</evidence>
<evidence type="ECO:0000269" key="8">
    <source>
    </source>
</evidence>
<evidence type="ECO:0000269" key="9">
    <source>
    </source>
</evidence>
<dbReference type="EC" id="1.7.-.-" evidence="1"/>
<dbReference type="EC" id="1.11.1.-" evidence="1"/>
<dbReference type="PIR" id="A90416">
    <property type="entry name" value="MYWHH"/>
</dbReference>
<dbReference type="SMR" id="P02178"/>
<dbReference type="GO" id="GO:0070062">
    <property type="term" value="C:extracellular exosome"/>
    <property type="evidence" value="ECO:0007669"/>
    <property type="project" value="TreeGrafter"/>
</dbReference>
<dbReference type="GO" id="GO:0016528">
    <property type="term" value="C:sarcoplasm"/>
    <property type="evidence" value="ECO:0000250"/>
    <property type="project" value="UniProtKB"/>
</dbReference>
<dbReference type="GO" id="GO:0020037">
    <property type="term" value="F:heme binding"/>
    <property type="evidence" value="ECO:0007669"/>
    <property type="project" value="InterPro"/>
</dbReference>
<dbReference type="GO" id="GO:0046872">
    <property type="term" value="F:metal ion binding"/>
    <property type="evidence" value="ECO:0007669"/>
    <property type="project" value="UniProtKB-KW"/>
</dbReference>
<dbReference type="GO" id="GO:0098809">
    <property type="term" value="F:nitrite reductase activity"/>
    <property type="evidence" value="ECO:0000250"/>
    <property type="project" value="UniProtKB"/>
</dbReference>
<dbReference type="GO" id="GO:0019825">
    <property type="term" value="F:oxygen binding"/>
    <property type="evidence" value="ECO:0007669"/>
    <property type="project" value="InterPro"/>
</dbReference>
<dbReference type="GO" id="GO:0005344">
    <property type="term" value="F:oxygen carrier activity"/>
    <property type="evidence" value="ECO:0000250"/>
    <property type="project" value="UniProtKB"/>
</dbReference>
<dbReference type="GO" id="GO:0004601">
    <property type="term" value="F:peroxidase activity"/>
    <property type="evidence" value="ECO:0000250"/>
    <property type="project" value="UniProtKB"/>
</dbReference>
<dbReference type="GO" id="GO:0019430">
    <property type="term" value="P:removal of superoxide radicals"/>
    <property type="evidence" value="ECO:0000250"/>
    <property type="project" value="UniProtKB"/>
</dbReference>
<dbReference type="CDD" id="cd08926">
    <property type="entry name" value="Mb"/>
    <property type="match status" value="1"/>
</dbReference>
<dbReference type="Gene3D" id="6.10.140.2100">
    <property type="match status" value="1"/>
</dbReference>
<dbReference type="Gene3D" id="6.10.140.2110">
    <property type="match status" value="1"/>
</dbReference>
<dbReference type="InterPro" id="IPR000971">
    <property type="entry name" value="Globin"/>
</dbReference>
<dbReference type="InterPro" id="IPR009050">
    <property type="entry name" value="Globin-like_sf"/>
</dbReference>
<dbReference type="InterPro" id="IPR002335">
    <property type="entry name" value="Myoglobin"/>
</dbReference>
<dbReference type="PANTHER" id="PTHR47132">
    <property type="entry name" value="MYOGLOBIN"/>
    <property type="match status" value="1"/>
</dbReference>
<dbReference type="PANTHER" id="PTHR47132:SF1">
    <property type="entry name" value="MYOGLOBIN"/>
    <property type="match status" value="1"/>
</dbReference>
<dbReference type="Pfam" id="PF00042">
    <property type="entry name" value="Globin"/>
    <property type="match status" value="1"/>
</dbReference>
<dbReference type="PRINTS" id="PR00613">
    <property type="entry name" value="MYOGLOBIN"/>
</dbReference>
<dbReference type="SUPFAM" id="SSF46458">
    <property type="entry name" value="Globin-like"/>
    <property type="match status" value="1"/>
</dbReference>
<dbReference type="PROSITE" id="PS01033">
    <property type="entry name" value="GLOBIN"/>
    <property type="match status" value="1"/>
</dbReference>
<sequence>MVLSDAEWQLVLNIWAKVEADVAGHGQDILIRLFKGHPETLEKFDKFKHLKTEAEMKASEDLKKHGNTVLTALGGILKKKGHHEAELKPLAQSHATKHKIPIKYLEFISDAIIHVLHSRHPADFGADAQAAMNKALELFRKDIAAKYKELGFQG</sequence>
<organism>
    <name type="scientific">Megaptera novaeangliae</name>
    <name type="common">Humpback whale</name>
    <name type="synonym">Balaena novaeangliae</name>
    <dbReference type="NCBI Taxonomy" id="9773"/>
    <lineage>
        <taxon>Eukaryota</taxon>
        <taxon>Metazoa</taxon>
        <taxon>Chordata</taxon>
        <taxon>Craniata</taxon>
        <taxon>Vertebrata</taxon>
        <taxon>Euteleostomi</taxon>
        <taxon>Mammalia</taxon>
        <taxon>Eutheria</taxon>
        <taxon>Laurasiatheria</taxon>
        <taxon>Artiodactyla</taxon>
        <taxon>Whippomorpha</taxon>
        <taxon>Cetacea</taxon>
        <taxon>Mysticeti</taxon>
        <taxon>Balaenopteridae</taxon>
        <taxon>Megaptera</taxon>
    </lineage>
</organism>
<keyword id="KW-0963">Cytoplasm</keyword>
<keyword id="KW-0903">Direct protein sequencing</keyword>
<keyword id="KW-0349">Heme</keyword>
<keyword id="KW-0408">Iron</keyword>
<keyword id="KW-0479">Metal-binding</keyword>
<keyword id="KW-0514">Muscle protein</keyword>
<keyword id="KW-0560">Oxidoreductase</keyword>
<keyword id="KW-0561">Oxygen transport</keyword>
<keyword id="KW-0597">Phosphoprotein</keyword>
<keyword id="KW-0813">Transport</keyword>
<accession>P02178</accession>
<proteinExistence type="evidence at protein level"/>
<name>MYG_MEGNO</name>
<comment type="function">
    <text evidence="1">Monomeric heme protein which primary function is to store oxygen and facilitate its diffusion within muscle tissues. Reversibly binds oxygen through a pentacoordinated heme iron and enables its timely and efficient release as needed during periods of heightened demand. Depending on the oxidative conditions of tissues and cells, and in addition to its ability to bind oxygen, it also has a nitrite reductase activity whereby it regulates the production of bioactive nitric oxide. Under stress conditions, like hypoxia and anoxia, it also protects cells against reactive oxygen species thanks to its pseudoperoxidase activity.</text>
</comment>
<comment type="catalytic activity">
    <reaction evidence="1">
        <text>Fe(III)-heme b-[protein] + nitric oxide + H2O = Fe(II)-heme b-[protein] + nitrite + 2 H(+)</text>
        <dbReference type="Rhea" id="RHEA:77711"/>
        <dbReference type="Rhea" id="RHEA-COMP:18975"/>
        <dbReference type="Rhea" id="RHEA-COMP:18976"/>
        <dbReference type="ChEBI" id="CHEBI:15377"/>
        <dbReference type="ChEBI" id="CHEBI:15378"/>
        <dbReference type="ChEBI" id="CHEBI:16301"/>
        <dbReference type="ChEBI" id="CHEBI:16480"/>
        <dbReference type="ChEBI" id="CHEBI:55376"/>
        <dbReference type="ChEBI" id="CHEBI:60344"/>
    </reaction>
    <physiologicalReaction direction="right-to-left" evidence="1">
        <dbReference type="Rhea" id="RHEA:77713"/>
    </physiologicalReaction>
</comment>
<comment type="catalytic activity">
    <reaction evidence="1">
        <text>H2O2 + AH2 = A + 2 H2O</text>
        <dbReference type="Rhea" id="RHEA:30275"/>
        <dbReference type="ChEBI" id="CHEBI:13193"/>
        <dbReference type="ChEBI" id="CHEBI:15377"/>
        <dbReference type="ChEBI" id="CHEBI:16240"/>
        <dbReference type="ChEBI" id="CHEBI:17499"/>
    </reaction>
</comment>
<comment type="subunit">
    <text evidence="2">Monomeric.</text>
</comment>
<comment type="subcellular location">
    <subcellularLocation>
        <location evidence="1">Cytoplasm</location>
        <location evidence="1">Sarcoplasm</location>
    </subcellularLocation>
</comment>
<comment type="miscellaneous">
    <text>This sequence was the first determined using the Edman sequencing system.</text>
</comment>
<comment type="similarity">
    <text evidence="7">Belongs to the globin family.</text>
</comment>